<keyword id="KW-0997">Cell inner membrane</keyword>
<keyword id="KW-1003">Cell membrane</keyword>
<keyword id="KW-0133">Cell shape</keyword>
<keyword id="KW-0961">Cell wall biogenesis/degradation</keyword>
<keyword id="KW-0328">Glycosyltransferase</keyword>
<keyword id="KW-0472">Membrane</keyword>
<keyword id="KW-0573">Peptidoglycan synthesis</keyword>
<keyword id="KW-1185">Reference proteome</keyword>
<keyword id="KW-0808">Transferase</keyword>
<keyword id="KW-0812">Transmembrane</keyword>
<keyword id="KW-1133">Transmembrane helix</keyword>
<evidence type="ECO:0000255" key="1">
    <source>
        <dbReference type="HAMAP-Rule" id="MF_00766"/>
    </source>
</evidence>
<reference key="1">
    <citation type="journal article" date="2009" name="PLoS Genet.">
        <title>Organised genome dynamics in the Escherichia coli species results in highly diverse adaptive paths.</title>
        <authorList>
            <person name="Touchon M."/>
            <person name="Hoede C."/>
            <person name="Tenaillon O."/>
            <person name="Barbe V."/>
            <person name="Baeriswyl S."/>
            <person name="Bidet P."/>
            <person name="Bingen E."/>
            <person name="Bonacorsi S."/>
            <person name="Bouchier C."/>
            <person name="Bouvet O."/>
            <person name="Calteau A."/>
            <person name="Chiapello H."/>
            <person name="Clermont O."/>
            <person name="Cruveiller S."/>
            <person name="Danchin A."/>
            <person name="Diard M."/>
            <person name="Dossat C."/>
            <person name="Karoui M.E."/>
            <person name="Frapy E."/>
            <person name="Garry L."/>
            <person name="Ghigo J.M."/>
            <person name="Gilles A.M."/>
            <person name="Johnson J."/>
            <person name="Le Bouguenec C."/>
            <person name="Lescat M."/>
            <person name="Mangenot S."/>
            <person name="Martinez-Jehanne V."/>
            <person name="Matic I."/>
            <person name="Nassif X."/>
            <person name="Oztas S."/>
            <person name="Petit M.A."/>
            <person name="Pichon C."/>
            <person name="Rouy Z."/>
            <person name="Ruf C.S."/>
            <person name="Schneider D."/>
            <person name="Tourret J."/>
            <person name="Vacherie B."/>
            <person name="Vallenet D."/>
            <person name="Medigue C."/>
            <person name="Rocha E.P.C."/>
            <person name="Denamur E."/>
        </authorList>
    </citation>
    <scope>NUCLEOTIDE SEQUENCE [LARGE SCALE GENOMIC DNA]</scope>
    <source>
        <strain>S88 / ExPEC</strain>
    </source>
</reference>
<organism>
    <name type="scientific">Escherichia coli O45:K1 (strain S88 / ExPEC)</name>
    <dbReference type="NCBI Taxonomy" id="585035"/>
    <lineage>
        <taxon>Bacteria</taxon>
        <taxon>Pseudomonadati</taxon>
        <taxon>Pseudomonadota</taxon>
        <taxon>Gammaproteobacteria</taxon>
        <taxon>Enterobacterales</taxon>
        <taxon>Enterobacteriaceae</taxon>
        <taxon>Escherichia</taxon>
    </lineage>
</organism>
<protein>
    <recommendedName>
        <fullName evidence="1">Biosynthetic peptidoglycan transglycosylase</fullName>
        <ecNumber evidence="1">2.4.99.28</ecNumber>
    </recommendedName>
    <alternativeName>
        <fullName evidence="1">Glycan polymerase</fullName>
    </alternativeName>
    <alternativeName>
        <fullName evidence="1">Peptidoglycan glycosyltransferase MtgA</fullName>
        <shortName evidence="1">PGT</shortName>
    </alternativeName>
</protein>
<name>MTGA_ECO45</name>
<proteinExistence type="inferred from homology"/>
<comment type="function">
    <text evidence="1">Peptidoglycan polymerase that catalyzes glycan chain elongation from lipid-linked precursors.</text>
</comment>
<comment type="catalytic activity">
    <reaction evidence="1">
        <text>[GlcNAc-(1-&gt;4)-Mur2Ac(oyl-L-Ala-gamma-D-Glu-L-Lys-D-Ala-D-Ala)](n)-di-trans,octa-cis-undecaprenyl diphosphate + beta-D-GlcNAc-(1-&gt;4)-Mur2Ac(oyl-L-Ala-gamma-D-Glu-L-Lys-D-Ala-D-Ala)-di-trans,octa-cis-undecaprenyl diphosphate = [GlcNAc-(1-&gt;4)-Mur2Ac(oyl-L-Ala-gamma-D-Glu-L-Lys-D-Ala-D-Ala)](n+1)-di-trans,octa-cis-undecaprenyl diphosphate + di-trans,octa-cis-undecaprenyl diphosphate + H(+)</text>
        <dbReference type="Rhea" id="RHEA:23708"/>
        <dbReference type="Rhea" id="RHEA-COMP:9602"/>
        <dbReference type="Rhea" id="RHEA-COMP:9603"/>
        <dbReference type="ChEBI" id="CHEBI:15378"/>
        <dbReference type="ChEBI" id="CHEBI:58405"/>
        <dbReference type="ChEBI" id="CHEBI:60033"/>
        <dbReference type="ChEBI" id="CHEBI:78435"/>
        <dbReference type="EC" id="2.4.99.28"/>
    </reaction>
</comment>
<comment type="pathway">
    <text evidence="1">Cell wall biogenesis; peptidoglycan biosynthesis.</text>
</comment>
<comment type="subcellular location">
    <subcellularLocation>
        <location evidence="1">Cell inner membrane</location>
        <topology evidence="1">Single-pass membrane protein</topology>
    </subcellularLocation>
</comment>
<comment type="similarity">
    <text evidence="1">Belongs to the glycosyltransferase 51 family.</text>
</comment>
<sequence>MSKSRLTVFSFVRRFLLRLMVVLAIFWGGGIALFSVAPVPFSAVMVERQVSAWLHGNFRYVAHSDWVSMDQISPWMGLAVIAAEDQKFPEHWGFDVASIEQALAHNERNENRIRGASTISQQTAKNLFLWDGRSWVRKGLEAGLTLGIETVWSKKRILTVYLNIAEFGDGVFGVEAAAQRYFHKPASKLTRSEAALLAAVLPNPLRFKVSAPSGYVRSRQAWILRQMYQLGGEPFMQQHQLD</sequence>
<dbReference type="EC" id="2.4.99.28" evidence="1"/>
<dbReference type="EMBL" id="CU928161">
    <property type="protein sequence ID" value="CAR04818.1"/>
    <property type="molecule type" value="Genomic_DNA"/>
</dbReference>
<dbReference type="RefSeq" id="WP_000047069.1">
    <property type="nucleotide sequence ID" value="NC_011742.1"/>
</dbReference>
<dbReference type="SMR" id="B7MBX7"/>
<dbReference type="CAZy" id="GT51">
    <property type="family name" value="Glycosyltransferase Family 51"/>
</dbReference>
<dbReference type="KEGG" id="ecz:ECS88_3592"/>
<dbReference type="HOGENOM" id="CLU_006354_1_1_6"/>
<dbReference type="UniPathway" id="UPA00219"/>
<dbReference type="Proteomes" id="UP000000747">
    <property type="component" value="Chromosome"/>
</dbReference>
<dbReference type="GO" id="GO:0009274">
    <property type="term" value="C:peptidoglycan-based cell wall"/>
    <property type="evidence" value="ECO:0007669"/>
    <property type="project" value="InterPro"/>
</dbReference>
<dbReference type="GO" id="GO:0005886">
    <property type="term" value="C:plasma membrane"/>
    <property type="evidence" value="ECO:0007669"/>
    <property type="project" value="UniProtKB-SubCell"/>
</dbReference>
<dbReference type="GO" id="GO:0016763">
    <property type="term" value="F:pentosyltransferase activity"/>
    <property type="evidence" value="ECO:0007669"/>
    <property type="project" value="InterPro"/>
</dbReference>
<dbReference type="GO" id="GO:0008955">
    <property type="term" value="F:peptidoglycan glycosyltransferase activity"/>
    <property type="evidence" value="ECO:0007669"/>
    <property type="project" value="UniProtKB-UniRule"/>
</dbReference>
<dbReference type="GO" id="GO:0071555">
    <property type="term" value="P:cell wall organization"/>
    <property type="evidence" value="ECO:0007669"/>
    <property type="project" value="UniProtKB-KW"/>
</dbReference>
<dbReference type="GO" id="GO:0009252">
    <property type="term" value="P:peptidoglycan biosynthetic process"/>
    <property type="evidence" value="ECO:0007669"/>
    <property type="project" value="UniProtKB-UniRule"/>
</dbReference>
<dbReference type="GO" id="GO:0008360">
    <property type="term" value="P:regulation of cell shape"/>
    <property type="evidence" value="ECO:0007669"/>
    <property type="project" value="UniProtKB-KW"/>
</dbReference>
<dbReference type="FunFam" id="1.10.3810.10:FF:000004">
    <property type="entry name" value="Biosynthetic peptidoglycan transglycosylase"/>
    <property type="match status" value="1"/>
</dbReference>
<dbReference type="Gene3D" id="1.10.3810.10">
    <property type="entry name" value="Biosynthetic peptidoglycan transglycosylase-like"/>
    <property type="match status" value="1"/>
</dbReference>
<dbReference type="HAMAP" id="MF_00766">
    <property type="entry name" value="PGT_MtgA"/>
    <property type="match status" value="1"/>
</dbReference>
<dbReference type="InterPro" id="IPR001264">
    <property type="entry name" value="Glyco_trans_51"/>
</dbReference>
<dbReference type="InterPro" id="IPR023346">
    <property type="entry name" value="Lysozyme-like_dom_sf"/>
</dbReference>
<dbReference type="InterPro" id="IPR036950">
    <property type="entry name" value="PBP_transglycosylase"/>
</dbReference>
<dbReference type="InterPro" id="IPR011812">
    <property type="entry name" value="Pep_trsgly"/>
</dbReference>
<dbReference type="NCBIfam" id="TIGR02070">
    <property type="entry name" value="mono_pep_trsgly"/>
    <property type="match status" value="1"/>
</dbReference>
<dbReference type="PANTHER" id="PTHR30400:SF0">
    <property type="entry name" value="BIOSYNTHETIC PEPTIDOGLYCAN TRANSGLYCOSYLASE"/>
    <property type="match status" value="1"/>
</dbReference>
<dbReference type="PANTHER" id="PTHR30400">
    <property type="entry name" value="MONOFUNCTIONAL BIOSYNTHETIC PEPTIDOGLYCAN TRANSGLYCOSYLASE"/>
    <property type="match status" value="1"/>
</dbReference>
<dbReference type="Pfam" id="PF00912">
    <property type="entry name" value="Transgly"/>
    <property type="match status" value="1"/>
</dbReference>
<dbReference type="SUPFAM" id="SSF53955">
    <property type="entry name" value="Lysozyme-like"/>
    <property type="match status" value="1"/>
</dbReference>
<gene>
    <name evidence="1" type="primary">mtgA</name>
    <name type="ordered locus">ECS88_3592</name>
</gene>
<feature type="chain" id="PRO_1000133590" description="Biosynthetic peptidoglycan transglycosylase">
    <location>
        <begin position="1"/>
        <end position="242"/>
    </location>
</feature>
<feature type="transmembrane region" description="Helical" evidence="1">
    <location>
        <begin position="19"/>
        <end position="39"/>
    </location>
</feature>
<accession>B7MBX7</accession>